<sequence length="93" mass="10469">MASIAAERIDRLHTLARAAARTGDDDRAREYVRLARRLAERNRLTLPPAFRRFTCDDCDAVLVPGRNARVRTRSGHVVVTCDCGTHARYPYTG</sequence>
<evidence type="ECO:0000255" key="1">
    <source>
        <dbReference type="HAMAP-Rule" id="MF_00757"/>
    </source>
</evidence>
<keyword id="KW-0963">Cytoplasm</keyword>
<keyword id="KW-0255">Endonuclease</keyword>
<keyword id="KW-0378">Hydrolase</keyword>
<keyword id="KW-0479">Metal-binding</keyword>
<keyword id="KW-0540">Nuclease</keyword>
<keyword id="KW-0819">tRNA processing</keyword>
<keyword id="KW-0862">Zinc</keyword>
<gene>
    <name evidence="1" type="primary">rnp4</name>
    <name type="ordered locus">OE_1907F</name>
</gene>
<proteinExistence type="inferred from homology"/>
<reference key="1">
    <citation type="journal article" date="2008" name="Genomics">
        <title>Evolution in the laboratory: the genome of Halobacterium salinarum strain R1 compared to that of strain NRC-1.</title>
        <authorList>
            <person name="Pfeiffer F."/>
            <person name="Schuster S.C."/>
            <person name="Broicher A."/>
            <person name="Falb M."/>
            <person name="Palm P."/>
            <person name="Rodewald K."/>
            <person name="Ruepp A."/>
            <person name="Soppa J."/>
            <person name="Tittor J."/>
            <person name="Oesterhelt D."/>
        </authorList>
    </citation>
    <scope>NUCLEOTIDE SEQUENCE [LARGE SCALE GENOMIC DNA]</scope>
    <source>
        <strain>ATCC 29341 / DSM 671 / R1</strain>
    </source>
</reference>
<organism>
    <name type="scientific">Halobacterium salinarum (strain ATCC 29341 / DSM 671 / R1)</name>
    <dbReference type="NCBI Taxonomy" id="478009"/>
    <lineage>
        <taxon>Archaea</taxon>
        <taxon>Methanobacteriati</taxon>
        <taxon>Methanobacteriota</taxon>
        <taxon>Stenosarchaea group</taxon>
        <taxon>Halobacteria</taxon>
        <taxon>Halobacteriales</taxon>
        <taxon>Halobacteriaceae</taxon>
        <taxon>Halobacterium</taxon>
        <taxon>Halobacterium salinarum NRC-34001</taxon>
    </lineage>
</organism>
<feature type="chain" id="PRO_1000194592" description="Ribonuclease P protein component 4">
    <location>
        <begin position="1"/>
        <end position="93"/>
    </location>
</feature>
<feature type="binding site" evidence="1">
    <location>
        <position position="55"/>
    </location>
    <ligand>
        <name>Zn(2+)</name>
        <dbReference type="ChEBI" id="CHEBI:29105"/>
    </ligand>
</feature>
<feature type="binding site" evidence="1">
    <location>
        <position position="58"/>
    </location>
    <ligand>
        <name>Zn(2+)</name>
        <dbReference type="ChEBI" id="CHEBI:29105"/>
    </ligand>
</feature>
<feature type="binding site" evidence="1">
    <location>
        <position position="81"/>
    </location>
    <ligand>
        <name>Zn(2+)</name>
        <dbReference type="ChEBI" id="CHEBI:29105"/>
    </ligand>
</feature>
<feature type="binding site" evidence="1">
    <location>
        <position position="83"/>
    </location>
    <ligand>
        <name>Zn(2+)</name>
        <dbReference type="ChEBI" id="CHEBI:29105"/>
    </ligand>
</feature>
<dbReference type="EC" id="3.1.26.5" evidence="1"/>
<dbReference type="EMBL" id="AM774415">
    <property type="protein sequence ID" value="CAP13378.1"/>
    <property type="molecule type" value="Genomic_DNA"/>
</dbReference>
<dbReference type="RefSeq" id="WP_010902407.1">
    <property type="nucleotide sequence ID" value="NC_010364.1"/>
</dbReference>
<dbReference type="SMR" id="B0R3R4"/>
<dbReference type="EnsemblBacteria" id="CAP13378">
    <property type="protein sequence ID" value="CAP13378"/>
    <property type="gene ID" value="OE_1907F"/>
</dbReference>
<dbReference type="KEGG" id="hsl:OE_1907F"/>
<dbReference type="HOGENOM" id="CLU_079140_3_0_2"/>
<dbReference type="PhylomeDB" id="B0R3R4"/>
<dbReference type="Proteomes" id="UP000001321">
    <property type="component" value="Chromosome"/>
</dbReference>
<dbReference type="GO" id="GO:0005737">
    <property type="term" value="C:cytoplasm"/>
    <property type="evidence" value="ECO:0007669"/>
    <property type="project" value="UniProtKB-SubCell"/>
</dbReference>
<dbReference type="GO" id="GO:0030677">
    <property type="term" value="C:ribonuclease P complex"/>
    <property type="evidence" value="ECO:0007669"/>
    <property type="project" value="UniProtKB-UniRule"/>
</dbReference>
<dbReference type="GO" id="GO:0004526">
    <property type="term" value="F:ribonuclease P activity"/>
    <property type="evidence" value="ECO:0007669"/>
    <property type="project" value="UniProtKB-UniRule"/>
</dbReference>
<dbReference type="GO" id="GO:0008270">
    <property type="term" value="F:zinc ion binding"/>
    <property type="evidence" value="ECO:0007669"/>
    <property type="project" value="UniProtKB-UniRule"/>
</dbReference>
<dbReference type="GO" id="GO:0001682">
    <property type="term" value="P:tRNA 5'-leader removal"/>
    <property type="evidence" value="ECO:0007669"/>
    <property type="project" value="UniProtKB-UniRule"/>
</dbReference>
<dbReference type="Gene3D" id="6.20.50.20">
    <property type="match status" value="1"/>
</dbReference>
<dbReference type="Gene3D" id="1.20.5.420">
    <property type="entry name" value="Immunoglobulin FC, subunit C"/>
    <property type="match status" value="1"/>
</dbReference>
<dbReference type="HAMAP" id="MF_00757">
    <property type="entry name" value="RNase_P_4"/>
    <property type="match status" value="1"/>
</dbReference>
<dbReference type="InterPro" id="IPR016432">
    <property type="entry name" value="RNP4"/>
</dbReference>
<dbReference type="InterPro" id="IPR007175">
    <property type="entry name" value="Rpr2/Snm1/Rpp21"/>
</dbReference>
<dbReference type="PANTHER" id="PTHR14742:SF0">
    <property type="entry name" value="RIBONUCLEASE P PROTEIN SUBUNIT P21"/>
    <property type="match status" value="1"/>
</dbReference>
<dbReference type="PANTHER" id="PTHR14742">
    <property type="entry name" value="RIBONUCLEASE P SUBUNIT P21"/>
    <property type="match status" value="1"/>
</dbReference>
<dbReference type="Pfam" id="PF04032">
    <property type="entry name" value="Rpr2"/>
    <property type="match status" value="1"/>
</dbReference>
<dbReference type="PIRSF" id="PIRSF004878">
    <property type="entry name" value="RNase_P_4"/>
    <property type="match status" value="1"/>
</dbReference>
<protein>
    <recommendedName>
        <fullName evidence="1">Ribonuclease P protein component 4</fullName>
        <shortName evidence="1">RNase P component 4</shortName>
        <ecNumber evidence="1">3.1.26.5</ecNumber>
    </recommendedName>
    <alternativeName>
        <fullName evidence="1">Rpp21</fullName>
    </alternativeName>
</protein>
<accession>B0R3R4</accession>
<comment type="function">
    <text evidence="1">Part of ribonuclease P, a protein complex that generates mature tRNA molecules by cleaving their 5'-ends.</text>
</comment>
<comment type="catalytic activity">
    <reaction evidence="1">
        <text>Endonucleolytic cleavage of RNA, removing 5'-extranucleotides from tRNA precursor.</text>
        <dbReference type="EC" id="3.1.26.5"/>
    </reaction>
</comment>
<comment type="cofactor">
    <cofactor evidence="1">
        <name>Zn(2+)</name>
        <dbReference type="ChEBI" id="CHEBI:29105"/>
    </cofactor>
    <text evidence="1">Binds 1 zinc ion per subunit.</text>
</comment>
<comment type="subunit">
    <text evidence="1">Consists of a catalytic RNA component and at least 4-5 protein subunits.</text>
</comment>
<comment type="subcellular location">
    <subcellularLocation>
        <location evidence="1">Cytoplasm</location>
    </subcellularLocation>
</comment>
<comment type="similarity">
    <text evidence="1">Belongs to the eukaryotic/archaeal RNase P protein component 4 family.</text>
</comment>
<name>RNP4_HALS3</name>